<keyword id="KW-0028">Amino-acid biosynthesis</keyword>
<keyword id="KW-0963">Cytoplasm</keyword>
<keyword id="KW-0220">Diaminopimelate biosynthesis</keyword>
<keyword id="KW-0456">Lyase</keyword>
<keyword id="KW-0457">Lysine biosynthesis</keyword>
<keyword id="KW-1185">Reference proteome</keyword>
<keyword id="KW-0704">Schiff base</keyword>
<gene>
    <name evidence="1" type="primary">dapA</name>
    <name type="ordered locus">LAF_0857</name>
</gene>
<evidence type="ECO:0000255" key="1">
    <source>
        <dbReference type="HAMAP-Rule" id="MF_00418"/>
    </source>
</evidence>
<evidence type="ECO:0000305" key="2"/>
<name>DAPA_LIMF3</name>
<protein>
    <recommendedName>
        <fullName evidence="1">4-hydroxy-tetrahydrodipicolinate synthase</fullName>
        <shortName evidence="1">HTPA synthase</shortName>
        <ecNumber evidence="1">4.3.3.7</ecNumber>
    </recommendedName>
</protein>
<proteinExistence type="inferred from homology"/>
<feature type="chain" id="PRO_1000124045" description="4-hydroxy-tetrahydrodipicolinate synthase">
    <location>
        <begin position="1"/>
        <end position="311"/>
    </location>
</feature>
<feature type="active site" description="Proton donor/acceptor" evidence="1">
    <location>
        <position position="138"/>
    </location>
</feature>
<feature type="active site" description="Schiff-base intermediate with substrate" evidence="1">
    <location>
        <position position="166"/>
    </location>
</feature>
<feature type="binding site" evidence="1">
    <location>
        <position position="49"/>
    </location>
    <ligand>
        <name>pyruvate</name>
        <dbReference type="ChEBI" id="CHEBI:15361"/>
    </ligand>
</feature>
<feature type="binding site" evidence="1">
    <location>
        <position position="207"/>
    </location>
    <ligand>
        <name>pyruvate</name>
        <dbReference type="ChEBI" id="CHEBI:15361"/>
    </ligand>
</feature>
<feature type="site" description="Part of a proton relay during catalysis" evidence="1">
    <location>
        <position position="48"/>
    </location>
</feature>
<feature type="site" description="Part of a proton relay during catalysis" evidence="1">
    <location>
        <position position="112"/>
    </location>
</feature>
<sequence length="311" mass="33017">MTELTNADLLTAIVTPFTDEGTIDYPALDQLTEHLLQAGNNGFVVGGTTGETPTLSHDEKIELYTHFGRLIAGRVPVIAGTGSNNTAETIAFTNEVAQIEGIDYALVVVPPYNKPNQRGMLAHFTAVADAVELPLIIYNIPGRTGVKMETSTVLTLAEHPNIAGIKQCASLEEFQTLVENRPAGFAVYTGEDAQALTTKVLGGDGVISVAAHNYAPQMRAMYDALSAGNYQVAAKLQRWLTPRMAALFMFPSPSPVKAVLAAQGLATDHCRLPICDLTAEEKEQLATALGLPSDALAGQLPTDLGEGLTND</sequence>
<dbReference type="EC" id="4.3.3.7" evidence="1"/>
<dbReference type="EMBL" id="AP008937">
    <property type="protein sequence ID" value="BAG27193.1"/>
    <property type="molecule type" value="Genomic_DNA"/>
</dbReference>
<dbReference type="RefSeq" id="WP_012391182.1">
    <property type="nucleotide sequence ID" value="NC_010610.1"/>
</dbReference>
<dbReference type="SMR" id="B2GC11"/>
<dbReference type="KEGG" id="lfe:LAF_0857"/>
<dbReference type="PATRIC" id="fig|334390.5.peg.943"/>
<dbReference type="eggNOG" id="COG0329">
    <property type="taxonomic scope" value="Bacteria"/>
</dbReference>
<dbReference type="HOGENOM" id="CLU_049343_7_1_9"/>
<dbReference type="UniPathway" id="UPA00034">
    <property type="reaction ID" value="UER00017"/>
</dbReference>
<dbReference type="Proteomes" id="UP000001697">
    <property type="component" value="Chromosome"/>
</dbReference>
<dbReference type="GO" id="GO:0005829">
    <property type="term" value="C:cytosol"/>
    <property type="evidence" value="ECO:0007669"/>
    <property type="project" value="TreeGrafter"/>
</dbReference>
<dbReference type="GO" id="GO:0008840">
    <property type="term" value="F:4-hydroxy-tetrahydrodipicolinate synthase activity"/>
    <property type="evidence" value="ECO:0007669"/>
    <property type="project" value="UniProtKB-UniRule"/>
</dbReference>
<dbReference type="GO" id="GO:0019877">
    <property type="term" value="P:diaminopimelate biosynthetic process"/>
    <property type="evidence" value="ECO:0007669"/>
    <property type="project" value="UniProtKB-UniRule"/>
</dbReference>
<dbReference type="GO" id="GO:0009089">
    <property type="term" value="P:lysine biosynthetic process via diaminopimelate"/>
    <property type="evidence" value="ECO:0007669"/>
    <property type="project" value="UniProtKB-UniRule"/>
</dbReference>
<dbReference type="CDD" id="cd00950">
    <property type="entry name" value="DHDPS"/>
    <property type="match status" value="1"/>
</dbReference>
<dbReference type="Gene3D" id="3.20.20.70">
    <property type="entry name" value="Aldolase class I"/>
    <property type="match status" value="1"/>
</dbReference>
<dbReference type="HAMAP" id="MF_00418">
    <property type="entry name" value="DapA"/>
    <property type="match status" value="1"/>
</dbReference>
<dbReference type="InterPro" id="IPR013785">
    <property type="entry name" value="Aldolase_TIM"/>
</dbReference>
<dbReference type="InterPro" id="IPR005263">
    <property type="entry name" value="DapA"/>
</dbReference>
<dbReference type="InterPro" id="IPR002220">
    <property type="entry name" value="DapA-like"/>
</dbReference>
<dbReference type="InterPro" id="IPR020625">
    <property type="entry name" value="Schiff_base-form_aldolases_AS"/>
</dbReference>
<dbReference type="NCBIfam" id="TIGR00674">
    <property type="entry name" value="dapA"/>
    <property type="match status" value="1"/>
</dbReference>
<dbReference type="PANTHER" id="PTHR12128:SF66">
    <property type="entry name" value="4-HYDROXY-2-OXOGLUTARATE ALDOLASE, MITOCHONDRIAL"/>
    <property type="match status" value="1"/>
</dbReference>
<dbReference type="PANTHER" id="PTHR12128">
    <property type="entry name" value="DIHYDRODIPICOLINATE SYNTHASE"/>
    <property type="match status" value="1"/>
</dbReference>
<dbReference type="Pfam" id="PF00701">
    <property type="entry name" value="DHDPS"/>
    <property type="match status" value="1"/>
</dbReference>
<dbReference type="PIRSF" id="PIRSF001365">
    <property type="entry name" value="DHDPS"/>
    <property type="match status" value="1"/>
</dbReference>
<dbReference type="PRINTS" id="PR00146">
    <property type="entry name" value="DHPICSNTHASE"/>
</dbReference>
<dbReference type="SMART" id="SM01130">
    <property type="entry name" value="DHDPS"/>
    <property type="match status" value="1"/>
</dbReference>
<dbReference type="SUPFAM" id="SSF51569">
    <property type="entry name" value="Aldolase"/>
    <property type="match status" value="1"/>
</dbReference>
<dbReference type="PROSITE" id="PS00666">
    <property type="entry name" value="DHDPS_2"/>
    <property type="match status" value="1"/>
</dbReference>
<accession>B2GC11</accession>
<organism>
    <name type="scientific">Limosilactobacillus fermentum (strain NBRC 3956 / LMG 18251)</name>
    <name type="common">Lactobacillus fermentum</name>
    <dbReference type="NCBI Taxonomy" id="334390"/>
    <lineage>
        <taxon>Bacteria</taxon>
        <taxon>Bacillati</taxon>
        <taxon>Bacillota</taxon>
        <taxon>Bacilli</taxon>
        <taxon>Lactobacillales</taxon>
        <taxon>Lactobacillaceae</taxon>
        <taxon>Limosilactobacillus</taxon>
    </lineage>
</organism>
<comment type="function">
    <text evidence="1">Catalyzes the condensation of (S)-aspartate-beta-semialdehyde [(S)-ASA] and pyruvate to 4-hydroxy-tetrahydrodipicolinate (HTPA).</text>
</comment>
<comment type="catalytic activity">
    <reaction evidence="1">
        <text>L-aspartate 4-semialdehyde + pyruvate = (2S,4S)-4-hydroxy-2,3,4,5-tetrahydrodipicolinate + H2O + H(+)</text>
        <dbReference type="Rhea" id="RHEA:34171"/>
        <dbReference type="ChEBI" id="CHEBI:15361"/>
        <dbReference type="ChEBI" id="CHEBI:15377"/>
        <dbReference type="ChEBI" id="CHEBI:15378"/>
        <dbReference type="ChEBI" id="CHEBI:67139"/>
        <dbReference type="ChEBI" id="CHEBI:537519"/>
        <dbReference type="EC" id="4.3.3.7"/>
    </reaction>
</comment>
<comment type="pathway">
    <text evidence="1">Amino-acid biosynthesis; L-lysine biosynthesis via DAP pathway; (S)-tetrahydrodipicolinate from L-aspartate: step 3/4.</text>
</comment>
<comment type="subunit">
    <text evidence="1">Homotetramer; dimer of dimers.</text>
</comment>
<comment type="subcellular location">
    <subcellularLocation>
        <location evidence="1">Cytoplasm</location>
    </subcellularLocation>
</comment>
<comment type="similarity">
    <text evidence="1">Belongs to the DapA family.</text>
</comment>
<comment type="caution">
    <text evidence="2">Was originally thought to be a dihydrodipicolinate synthase (DHDPS), catalyzing the condensation of (S)-aspartate-beta-semialdehyde [(S)-ASA] and pyruvate to dihydrodipicolinate (DHDP). However, it was shown in E.coli that the product of the enzymatic reaction is not dihydrodipicolinate but in fact (4S)-4-hydroxy-2,3,4,5-tetrahydro-(2S)-dipicolinic acid (HTPA), and that the consecutive dehydration reaction leading to DHDP is not spontaneous but catalyzed by DapB.</text>
</comment>
<reference key="1">
    <citation type="journal article" date="2008" name="DNA Res.">
        <title>Comparative genome analysis of Lactobacillus reuteri and Lactobacillus fermentum reveal a genomic island for reuterin and cobalamin production.</title>
        <authorList>
            <person name="Morita H."/>
            <person name="Toh H."/>
            <person name="Fukuda S."/>
            <person name="Horikawa H."/>
            <person name="Oshima K."/>
            <person name="Suzuki T."/>
            <person name="Murakami M."/>
            <person name="Hisamatsu S."/>
            <person name="Kato Y."/>
            <person name="Takizawa T."/>
            <person name="Fukuoka H."/>
            <person name="Yoshimura T."/>
            <person name="Itoh K."/>
            <person name="O'Sullivan D.J."/>
            <person name="McKay L.L."/>
            <person name="Ohno H."/>
            <person name="Kikuchi J."/>
            <person name="Masaoka T."/>
            <person name="Hattori M."/>
        </authorList>
    </citation>
    <scope>NUCLEOTIDE SEQUENCE [LARGE SCALE GENOMIC DNA]</scope>
    <source>
        <strain>NBRC 3956 / LMG 18251</strain>
    </source>
</reference>